<gene>
    <name type="primary">mdtE</name>
    <name type="ordered locus">Z4926</name>
    <name type="ordered locus">ECs4393</name>
</gene>
<sequence>MNRRRKLLIPLLFCGAMLTACDDKSAENTAAMTPEVGVVTLSPGSVNVLSELPGRTVPYEVAEIRPQVGGIIIKRNFIEGDKVNQGDSLYQIDPAPLQAELNSAKGSLAKALSTASNARITFNRQASLLKTNYVSRQDYDTARTQLNEAEANVTVAKAAVEQATINLQYANVTSPITGVSGKSSVTVGALVTANQADSLVTVQRLDPIYVDLTQSVQDFLRMKEEVASGQIKQVQGSTPVQLNLENGKRYSQTGTLKFSDPTVDETTGSVTLRAIFPNPNGDLLPGMYVTALVDEGSRQNVLLVPQEGVTHNAQGKATALILDKDDVVKLREIEASKAIGDQWVVTSGLQAGDRVIVSGLQRIRPGIKARAISSSQENASTESKQ</sequence>
<proteinExistence type="inferred from homology"/>
<organism>
    <name type="scientific">Escherichia coli O157:H7</name>
    <dbReference type="NCBI Taxonomy" id="83334"/>
    <lineage>
        <taxon>Bacteria</taxon>
        <taxon>Pseudomonadati</taxon>
        <taxon>Pseudomonadota</taxon>
        <taxon>Gammaproteobacteria</taxon>
        <taxon>Enterobacterales</taxon>
        <taxon>Enterobacteriaceae</taxon>
        <taxon>Escherichia</taxon>
    </lineage>
</organism>
<protein>
    <recommendedName>
        <fullName>Multidrug resistance protein MdtE</fullName>
    </recommendedName>
</protein>
<comment type="function">
    <text evidence="1">Part of the tripartite efflux system MdtEF-TolC, which confers resistance to various compounds.</text>
</comment>
<comment type="subunit">
    <text evidence="1">Homotrimer. Part of the tripartite efflux system MdtEF-TolC, which is composed of an inner membrane transporter, MdtF, a membrane fusion protein, MdtE, and an outer membrane component, TolC. The complex forms a large protein conduit and can translocate molecules across both the inner and outer membranes (By similarity).</text>
</comment>
<comment type="subcellular location">
    <subcellularLocation>
        <location evidence="3">Cell inner membrane</location>
        <topology evidence="2">Lipid-anchor</topology>
    </subcellularLocation>
</comment>
<comment type="similarity">
    <text evidence="3">Belongs to the membrane fusion protein (MFP) (TC 8.A.1) family.</text>
</comment>
<name>MDTE_ECO57</name>
<evidence type="ECO:0000250" key="1"/>
<evidence type="ECO:0000255" key="2">
    <source>
        <dbReference type="PROSITE-ProRule" id="PRU00303"/>
    </source>
</evidence>
<evidence type="ECO:0000305" key="3"/>
<accession>Q8X4L0</accession>
<accession>Q7AA09</accession>
<dbReference type="EMBL" id="AE005174">
    <property type="protein sequence ID" value="AAG58654.1"/>
    <property type="molecule type" value="Genomic_DNA"/>
</dbReference>
<dbReference type="EMBL" id="BA000007">
    <property type="protein sequence ID" value="BAB37816.1"/>
    <property type="molecule type" value="Genomic_DNA"/>
</dbReference>
<dbReference type="PIR" id="A91178">
    <property type="entry name" value="A91178"/>
</dbReference>
<dbReference type="PIR" id="B86024">
    <property type="entry name" value="B86024"/>
</dbReference>
<dbReference type="RefSeq" id="NP_312420.1">
    <property type="nucleotide sequence ID" value="NC_002695.1"/>
</dbReference>
<dbReference type="SMR" id="Q8X4L0"/>
<dbReference type="STRING" id="155864.Z4926"/>
<dbReference type="GeneID" id="915750"/>
<dbReference type="KEGG" id="ece:Z4926"/>
<dbReference type="KEGG" id="ecs:ECs_4393"/>
<dbReference type="PATRIC" id="fig|386585.9.peg.4591"/>
<dbReference type="eggNOG" id="COG0845">
    <property type="taxonomic scope" value="Bacteria"/>
</dbReference>
<dbReference type="HOGENOM" id="CLU_018816_2_1_6"/>
<dbReference type="OMA" id="ENATRMQ"/>
<dbReference type="Proteomes" id="UP000000558">
    <property type="component" value="Chromosome"/>
</dbReference>
<dbReference type="Proteomes" id="UP000002519">
    <property type="component" value="Chromosome"/>
</dbReference>
<dbReference type="GO" id="GO:0005886">
    <property type="term" value="C:plasma membrane"/>
    <property type="evidence" value="ECO:0007669"/>
    <property type="project" value="UniProtKB-SubCell"/>
</dbReference>
<dbReference type="GO" id="GO:0022857">
    <property type="term" value="F:transmembrane transporter activity"/>
    <property type="evidence" value="ECO:0007669"/>
    <property type="project" value="InterPro"/>
</dbReference>
<dbReference type="GO" id="GO:0015721">
    <property type="term" value="P:bile acid and bile salt transport"/>
    <property type="evidence" value="ECO:0007669"/>
    <property type="project" value="TreeGrafter"/>
</dbReference>
<dbReference type="GO" id="GO:0046677">
    <property type="term" value="P:response to antibiotic"/>
    <property type="evidence" value="ECO:0007669"/>
    <property type="project" value="UniProtKB-KW"/>
</dbReference>
<dbReference type="GO" id="GO:0009636">
    <property type="term" value="P:response to toxic substance"/>
    <property type="evidence" value="ECO:0007669"/>
    <property type="project" value="UniProtKB-ARBA"/>
</dbReference>
<dbReference type="FunFam" id="2.40.420.20:FF:000001">
    <property type="entry name" value="Efflux RND transporter periplasmic adaptor subunit"/>
    <property type="match status" value="1"/>
</dbReference>
<dbReference type="FunFam" id="2.40.30.170:FF:000001">
    <property type="entry name" value="Multidrug resistance efflux transporter MdtE"/>
    <property type="match status" value="1"/>
</dbReference>
<dbReference type="Gene3D" id="2.40.30.170">
    <property type="match status" value="1"/>
</dbReference>
<dbReference type="Gene3D" id="2.40.420.20">
    <property type="match status" value="1"/>
</dbReference>
<dbReference type="Gene3D" id="2.40.50.100">
    <property type="match status" value="1"/>
</dbReference>
<dbReference type="Gene3D" id="1.10.287.470">
    <property type="entry name" value="Helix hairpin bin"/>
    <property type="match status" value="1"/>
</dbReference>
<dbReference type="InterPro" id="IPR043602">
    <property type="entry name" value="CusB-like_dom_1"/>
</dbReference>
<dbReference type="InterPro" id="IPR032317">
    <property type="entry name" value="CusB_D23"/>
</dbReference>
<dbReference type="InterPro" id="IPR051160">
    <property type="entry name" value="MFP_Efflux"/>
</dbReference>
<dbReference type="InterPro" id="IPR006143">
    <property type="entry name" value="RND_pump_MFP"/>
</dbReference>
<dbReference type="NCBIfam" id="NF007362">
    <property type="entry name" value="PRK09859.1"/>
    <property type="match status" value="1"/>
</dbReference>
<dbReference type="NCBIfam" id="TIGR01730">
    <property type="entry name" value="RND_mfp"/>
    <property type="match status" value="1"/>
</dbReference>
<dbReference type="PANTHER" id="PTHR30158">
    <property type="entry name" value="ACRA/E-RELATED COMPONENT OF DRUG EFFLUX TRANSPORTER"/>
    <property type="match status" value="1"/>
</dbReference>
<dbReference type="PANTHER" id="PTHR30158:SF3">
    <property type="entry name" value="MULTIDRUG EFFLUX PUMP SUBUNIT ACRA-RELATED"/>
    <property type="match status" value="1"/>
</dbReference>
<dbReference type="Pfam" id="PF00529">
    <property type="entry name" value="CusB_dom_1"/>
    <property type="match status" value="1"/>
</dbReference>
<dbReference type="Pfam" id="PF16576">
    <property type="entry name" value="HlyD_D23"/>
    <property type="match status" value="1"/>
</dbReference>
<dbReference type="SUPFAM" id="SSF111369">
    <property type="entry name" value="HlyD-like secretion proteins"/>
    <property type="match status" value="1"/>
</dbReference>
<dbReference type="PROSITE" id="PS51257">
    <property type="entry name" value="PROKAR_LIPOPROTEIN"/>
    <property type="match status" value="1"/>
</dbReference>
<reference key="1">
    <citation type="journal article" date="2001" name="Nature">
        <title>Genome sequence of enterohaemorrhagic Escherichia coli O157:H7.</title>
        <authorList>
            <person name="Perna N.T."/>
            <person name="Plunkett G. III"/>
            <person name="Burland V."/>
            <person name="Mau B."/>
            <person name="Glasner J.D."/>
            <person name="Rose D.J."/>
            <person name="Mayhew G.F."/>
            <person name="Evans P.S."/>
            <person name="Gregor J."/>
            <person name="Kirkpatrick H.A."/>
            <person name="Posfai G."/>
            <person name="Hackett J."/>
            <person name="Klink S."/>
            <person name="Boutin A."/>
            <person name="Shao Y."/>
            <person name="Miller L."/>
            <person name="Grotbeck E.J."/>
            <person name="Davis N.W."/>
            <person name="Lim A."/>
            <person name="Dimalanta E.T."/>
            <person name="Potamousis K."/>
            <person name="Apodaca J."/>
            <person name="Anantharaman T.S."/>
            <person name="Lin J."/>
            <person name="Yen G."/>
            <person name="Schwartz D.C."/>
            <person name="Welch R.A."/>
            <person name="Blattner F.R."/>
        </authorList>
    </citation>
    <scope>NUCLEOTIDE SEQUENCE [LARGE SCALE GENOMIC DNA]</scope>
    <source>
        <strain>O157:H7 / EDL933 / ATCC 700927 / EHEC</strain>
    </source>
</reference>
<reference key="2">
    <citation type="journal article" date="2001" name="DNA Res.">
        <title>Complete genome sequence of enterohemorrhagic Escherichia coli O157:H7 and genomic comparison with a laboratory strain K-12.</title>
        <authorList>
            <person name="Hayashi T."/>
            <person name="Makino K."/>
            <person name="Ohnishi M."/>
            <person name="Kurokawa K."/>
            <person name="Ishii K."/>
            <person name="Yokoyama K."/>
            <person name="Han C.-G."/>
            <person name="Ohtsubo E."/>
            <person name="Nakayama K."/>
            <person name="Murata T."/>
            <person name="Tanaka M."/>
            <person name="Tobe T."/>
            <person name="Iida T."/>
            <person name="Takami H."/>
            <person name="Honda T."/>
            <person name="Sasakawa C."/>
            <person name="Ogasawara N."/>
            <person name="Yasunaga T."/>
            <person name="Kuhara S."/>
            <person name="Shiba T."/>
            <person name="Hattori M."/>
            <person name="Shinagawa H."/>
        </authorList>
    </citation>
    <scope>NUCLEOTIDE SEQUENCE [LARGE SCALE GENOMIC DNA]</scope>
    <source>
        <strain>O157:H7 / Sakai / RIMD 0509952 / EHEC</strain>
    </source>
</reference>
<feature type="signal peptide" evidence="2">
    <location>
        <begin position="1"/>
        <end position="20"/>
    </location>
</feature>
<feature type="chain" id="PRO_0000018709" description="Multidrug resistance protein MdtE">
    <location>
        <begin position="21"/>
        <end position="385"/>
    </location>
</feature>
<feature type="lipid moiety-binding region" description="N-palmitoyl cysteine" evidence="2">
    <location>
        <position position="21"/>
    </location>
</feature>
<feature type="lipid moiety-binding region" description="S-diacylglycerol cysteine" evidence="2">
    <location>
        <position position="21"/>
    </location>
</feature>
<keyword id="KW-0046">Antibiotic resistance</keyword>
<keyword id="KW-0997">Cell inner membrane</keyword>
<keyword id="KW-1003">Cell membrane</keyword>
<keyword id="KW-0449">Lipoprotein</keyword>
<keyword id="KW-0472">Membrane</keyword>
<keyword id="KW-0564">Palmitate</keyword>
<keyword id="KW-1185">Reference proteome</keyword>
<keyword id="KW-0732">Signal</keyword>
<keyword id="KW-0813">Transport</keyword>